<reference key="1">
    <citation type="journal article" date="2008" name="PLoS Genet.">
        <title>Genomic islands in the pathogenic filamentous fungus Aspergillus fumigatus.</title>
        <authorList>
            <person name="Fedorova N.D."/>
            <person name="Khaldi N."/>
            <person name="Joardar V.S."/>
            <person name="Maiti R."/>
            <person name="Amedeo P."/>
            <person name="Anderson M.J."/>
            <person name="Crabtree J."/>
            <person name="Silva J.C."/>
            <person name="Badger J.H."/>
            <person name="Albarraq A."/>
            <person name="Angiuoli S."/>
            <person name="Bussey H."/>
            <person name="Bowyer P."/>
            <person name="Cotty P.J."/>
            <person name="Dyer P.S."/>
            <person name="Egan A."/>
            <person name="Galens K."/>
            <person name="Fraser-Liggett C.M."/>
            <person name="Haas B.J."/>
            <person name="Inman J.M."/>
            <person name="Kent R."/>
            <person name="Lemieux S."/>
            <person name="Malavazi I."/>
            <person name="Orvis J."/>
            <person name="Roemer T."/>
            <person name="Ronning C.M."/>
            <person name="Sundaram J.P."/>
            <person name="Sutton G."/>
            <person name="Turner G."/>
            <person name="Venter J.C."/>
            <person name="White O.R."/>
            <person name="Whitty B.R."/>
            <person name="Youngman P."/>
            <person name="Wolfe K.H."/>
            <person name="Goldman G.H."/>
            <person name="Wortman J.R."/>
            <person name="Jiang B."/>
            <person name="Denning D.W."/>
            <person name="Nierman W.C."/>
        </authorList>
    </citation>
    <scope>NUCLEOTIDE SEQUENCE [LARGE SCALE GENOMIC DNA]</scope>
    <source>
        <strain>CBS 144.89 / FGSC A1163 / CEA10</strain>
    </source>
</reference>
<evidence type="ECO:0000255" key="1">
    <source>
        <dbReference type="HAMAP-Rule" id="MF_03058"/>
    </source>
</evidence>
<evidence type="ECO:0000256" key="2">
    <source>
        <dbReference type="SAM" id="MobiDB-lite"/>
    </source>
</evidence>
<dbReference type="EMBL" id="DS499596">
    <property type="protein sequence ID" value="EDP52896.1"/>
    <property type="molecule type" value="Genomic_DNA"/>
</dbReference>
<dbReference type="SMR" id="B0XYF0"/>
<dbReference type="EnsemblFungi" id="EDP52896">
    <property type="protein sequence ID" value="EDP52896"/>
    <property type="gene ID" value="AFUB_040680"/>
</dbReference>
<dbReference type="HOGENOM" id="CLU_154717_1_1_1"/>
<dbReference type="OrthoDB" id="106899at5052"/>
<dbReference type="PhylomeDB" id="B0XYF0"/>
<dbReference type="Proteomes" id="UP000001699">
    <property type="component" value="Unassembled WGS sequence"/>
</dbReference>
<dbReference type="GO" id="GO:0005789">
    <property type="term" value="C:endoplasmic reticulum membrane"/>
    <property type="evidence" value="ECO:0007669"/>
    <property type="project" value="UniProtKB-SubCell"/>
</dbReference>
<dbReference type="GO" id="GO:0033116">
    <property type="term" value="C:endoplasmic reticulum-Golgi intermediate compartment membrane"/>
    <property type="evidence" value="ECO:0007669"/>
    <property type="project" value="UniProtKB-SubCell"/>
</dbReference>
<dbReference type="GO" id="GO:0012507">
    <property type="term" value="C:ER to Golgi transport vesicle membrane"/>
    <property type="evidence" value="ECO:0007669"/>
    <property type="project" value="UniProtKB-SubCell"/>
</dbReference>
<dbReference type="GO" id="GO:0070072">
    <property type="term" value="P:vacuolar proton-transporting V-type ATPase complex assembly"/>
    <property type="evidence" value="ECO:0007669"/>
    <property type="project" value="UniProtKB-UniRule"/>
</dbReference>
<dbReference type="HAMAP" id="MF_03058">
    <property type="entry name" value="VMA21"/>
    <property type="match status" value="1"/>
</dbReference>
<dbReference type="InterPro" id="IPR019013">
    <property type="entry name" value="Vma21"/>
</dbReference>
<dbReference type="PANTHER" id="PTHR31792">
    <property type="entry name" value="VACUOLAR ATPASE ASSEMBLY INTEGRAL MEMBRANE PROTEIN VMA21"/>
    <property type="match status" value="1"/>
</dbReference>
<dbReference type="PANTHER" id="PTHR31792:SF3">
    <property type="entry name" value="VACUOLAR ATPASE ASSEMBLY INTEGRAL MEMBRANE PROTEIN VMA21"/>
    <property type="match status" value="1"/>
</dbReference>
<dbReference type="Pfam" id="PF09446">
    <property type="entry name" value="VMA21"/>
    <property type="match status" value="1"/>
</dbReference>
<proteinExistence type="inferred from homology"/>
<protein>
    <recommendedName>
        <fullName evidence="1">Vacuolar ATPase assembly integral membrane protein vma21</fullName>
    </recommendedName>
</protein>
<name>VMA21_ASPFC</name>
<keyword id="KW-0968">Cytoplasmic vesicle</keyword>
<keyword id="KW-0256">Endoplasmic reticulum</keyword>
<keyword id="KW-0472">Membrane</keyword>
<keyword id="KW-0812">Transmembrane</keyword>
<keyword id="KW-1133">Transmembrane helix</keyword>
<gene>
    <name type="primary">vma21</name>
    <name type="ORF">AFUB_040680</name>
</gene>
<organism>
    <name type="scientific">Aspergillus fumigatus (strain CBS 144.89 / FGSC A1163 / CEA10)</name>
    <name type="common">Neosartorya fumigata</name>
    <dbReference type="NCBI Taxonomy" id="451804"/>
    <lineage>
        <taxon>Eukaryota</taxon>
        <taxon>Fungi</taxon>
        <taxon>Dikarya</taxon>
        <taxon>Ascomycota</taxon>
        <taxon>Pezizomycotina</taxon>
        <taxon>Eurotiomycetes</taxon>
        <taxon>Eurotiomycetidae</taxon>
        <taxon>Eurotiales</taxon>
        <taxon>Aspergillaceae</taxon>
        <taxon>Aspergillus</taxon>
        <taxon>Aspergillus subgen. Fumigati</taxon>
    </lineage>
</organism>
<accession>B0XYF0</accession>
<feature type="chain" id="PRO_0000377580" description="Vacuolar ATPase assembly integral membrane protein vma21">
    <location>
        <begin position="1"/>
        <end position="127"/>
    </location>
</feature>
<feature type="topological domain" description="Cytoplasmic" evidence="1">
    <location>
        <begin position="1"/>
        <end position="39"/>
    </location>
</feature>
<feature type="transmembrane region" description="Helical" evidence="1">
    <location>
        <begin position="40"/>
        <end position="60"/>
    </location>
</feature>
<feature type="topological domain" description="Lumenal" evidence="1">
    <location>
        <begin position="61"/>
        <end position="88"/>
    </location>
</feature>
<feature type="transmembrane region" description="Helical" evidence="1">
    <location>
        <begin position="89"/>
        <end position="109"/>
    </location>
</feature>
<feature type="topological domain" description="Cytoplasmic" evidence="1">
    <location>
        <begin position="110"/>
        <end position="127"/>
    </location>
</feature>
<feature type="region of interest" description="Disordered" evidence="2">
    <location>
        <begin position="1"/>
        <end position="28"/>
    </location>
</feature>
<feature type="short sequence motif" description="Prevents secretion from ER">
    <location>
        <begin position="124"/>
        <end position="127"/>
    </location>
</feature>
<feature type="compositionally biased region" description="Basic and acidic residues" evidence="2">
    <location>
        <begin position="1"/>
        <end position="11"/>
    </location>
</feature>
<feature type="compositionally biased region" description="Low complexity" evidence="2">
    <location>
        <begin position="12"/>
        <end position="26"/>
    </location>
</feature>
<comment type="function">
    <text evidence="1">Required for the assembly of the V0 complex of the vacuolar ATPase (V-ATPase) in the endoplasmic reticulum.</text>
</comment>
<comment type="subcellular location">
    <subcellularLocation>
        <location evidence="1">Endoplasmic reticulum membrane</location>
        <topology evidence="1">Multi-pass membrane protein</topology>
    </subcellularLocation>
    <subcellularLocation>
        <location evidence="1">Endoplasmic reticulum-Golgi intermediate compartment membrane</location>
        <topology evidence="1">Multi-pass membrane protein</topology>
    </subcellularLocation>
    <subcellularLocation>
        <location evidence="1">Cytoplasmic vesicle</location>
        <location evidence="1">COPII-coated vesicle membrane</location>
        <topology evidence="1">Multi-pass membrane protein</topology>
    </subcellularLocation>
</comment>
<comment type="similarity">
    <text evidence="1">Belongs to the VMA21 family.</text>
</comment>
<sequence>MTSRRSQEKSYAEAAAAPPPKESASSDVTPAVPADVIYKLLGFTAAMVVGPIGMYFVTVNSGGMSFFHQTSNFSLFETLTRIASPTVAGITAAITANLVLFGYIYVAWLDDREEREAASKRNEKKAQ</sequence>